<gene>
    <name type="primary">coa2</name>
    <name type="synonym">new5</name>
    <name type="ORF">SPAC15A10.17</name>
</gene>
<dbReference type="EMBL" id="CU329670">
    <property type="protein sequence ID" value="CCD31330.1"/>
    <property type="molecule type" value="Genomic_DNA"/>
</dbReference>
<dbReference type="RefSeq" id="XP_004001785.1">
    <property type="nucleotide sequence ID" value="XM_004001736.1"/>
</dbReference>
<dbReference type="PaxDb" id="4896-SPAC15A10.17.1"/>
<dbReference type="EnsemblFungi" id="SPAC15A10.17.1">
    <property type="protein sequence ID" value="SPAC15A10.17.1:pep"/>
    <property type="gene ID" value="SPAC15A10.17"/>
</dbReference>
<dbReference type="PomBase" id="SPAC15A10.17">
    <property type="gene designation" value="coa2"/>
</dbReference>
<dbReference type="VEuPathDB" id="FungiDB:SPAC15A10.17"/>
<dbReference type="HOGENOM" id="CLU_191677_0_0_1"/>
<dbReference type="InParanoid" id="G2TRM8"/>
<dbReference type="PRO" id="PR:G2TRM8"/>
<dbReference type="Proteomes" id="UP000002485">
    <property type="component" value="Chromosome I"/>
</dbReference>
<dbReference type="GO" id="GO:0005743">
    <property type="term" value="C:mitochondrial inner membrane"/>
    <property type="evidence" value="ECO:0007669"/>
    <property type="project" value="UniProtKB-SubCell"/>
</dbReference>
<dbReference type="GO" id="GO:0005759">
    <property type="term" value="C:mitochondrial matrix"/>
    <property type="evidence" value="ECO:0000266"/>
    <property type="project" value="PomBase"/>
</dbReference>
<dbReference type="GO" id="GO:0033617">
    <property type="term" value="P:mitochondrial cytochrome c oxidase assembly"/>
    <property type="evidence" value="ECO:0000266"/>
    <property type="project" value="PomBase"/>
</dbReference>
<dbReference type="InterPro" id="IPR031459">
    <property type="entry name" value="Coa2"/>
</dbReference>
<dbReference type="Pfam" id="PF17051">
    <property type="entry name" value="COA2"/>
    <property type="match status" value="1"/>
</dbReference>
<organism>
    <name type="scientific">Schizosaccharomyces pombe (strain 972 / ATCC 24843)</name>
    <name type="common">Fission yeast</name>
    <dbReference type="NCBI Taxonomy" id="284812"/>
    <lineage>
        <taxon>Eukaryota</taxon>
        <taxon>Fungi</taxon>
        <taxon>Dikarya</taxon>
        <taxon>Ascomycota</taxon>
        <taxon>Taphrinomycotina</taxon>
        <taxon>Schizosaccharomycetes</taxon>
        <taxon>Schizosaccharomycetales</taxon>
        <taxon>Schizosaccharomycetaceae</taxon>
        <taxon>Schizosaccharomyces</taxon>
    </lineage>
</organism>
<feature type="chain" id="PRO_0000416489" description="Cytochrome c oxidase assembly factor 2">
    <location>
        <begin position="1"/>
        <end position="86"/>
    </location>
</feature>
<sequence length="86" mass="9444">MFRTLKASQKRSLVNLMFGTTALFATATVIFPSLLPCPAMKNPYLDTQSDPGYEELPENSRVIVIDQQSPKSSLVASKQNNPPSKS</sequence>
<accession>G2TRM8</accession>
<proteinExistence type="evidence at protein level"/>
<protein>
    <recommendedName>
        <fullName>Cytochrome c oxidase assembly factor 2</fullName>
    </recommendedName>
</protein>
<reference key="1">
    <citation type="journal article" date="2002" name="Nature">
        <title>The genome sequence of Schizosaccharomyces pombe.</title>
        <authorList>
            <person name="Wood V."/>
            <person name="Gwilliam R."/>
            <person name="Rajandream M.A."/>
            <person name="Lyne M.H."/>
            <person name="Lyne R."/>
            <person name="Stewart A."/>
            <person name="Sgouros J.G."/>
            <person name="Peat N."/>
            <person name="Hayles J."/>
            <person name="Baker S.G."/>
            <person name="Basham D."/>
            <person name="Bowman S."/>
            <person name="Brooks K."/>
            <person name="Brown D."/>
            <person name="Brown S."/>
            <person name="Chillingworth T."/>
            <person name="Churcher C.M."/>
            <person name="Collins M."/>
            <person name="Connor R."/>
            <person name="Cronin A."/>
            <person name="Davis P."/>
            <person name="Feltwell T."/>
            <person name="Fraser A."/>
            <person name="Gentles S."/>
            <person name="Goble A."/>
            <person name="Hamlin N."/>
            <person name="Harris D.E."/>
            <person name="Hidalgo J."/>
            <person name="Hodgson G."/>
            <person name="Holroyd S."/>
            <person name="Hornsby T."/>
            <person name="Howarth S."/>
            <person name="Huckle E.J."/>
            <person name="Hunt S."/>
            <person name="Jagels K."/>
            <person name="James K.D."/>
            <person name="Jones L."/>
            <person name="Jones M."/>
            <person name="Leather S."/>
            <person name="McDonald S."/>
            <person name="McLean J."/>
            <person name="Mooney P."/>
            <person name="Moule S."/>
            <person name="Mungall K.L."/>
            <person name="Murphy L.D."/>
            <person name="Niblett D."/>
            <person name="Odell C."/>
            <person name="Oliver K."/>
            <person name="O'Neil S."/>
            <person name="Pearson D."/>
            <person name="Quail M.A."/>
            <person name="Rabbinowitsch E."/>
            <person name="Rutherford K.M."/>
            <person name="Rutter S."/>
            <person name="Saunders D."/>
            <person name="Seeger K."/>
            <person name="Sharp S."/>
            <person name="Skelton J."/>
            <person name="Simmonds M.N."/>
            <person name="Squares R."/>
            <person name="Squares S."/>
            <person name="Stevens K."/>
            <person name="Taylor K."/>
            <person name="Taylor R.G."/>
            <person name="Tivey A."/>
            <person name="Walsh S.V."/>
            <person name="Warren T."/>
            <person name="Whitehead S."/>
            <person name="Woodward J.R."/>
            <person name="Volckaert G."/>
            <person name="Aert R."/>
            <person name="Robben J."/>
            <person name="Grymonprez B."/>
            <person name="Weltjens I."/>
            <person name="Vanstreels E."/>
            <person name="Rieger M."/>
            <person name="Schaefer M."/>
            <person name="Mueller-Auer S."/>
            <person name="Gabel C."/>
            <person name="Fuchs M."/>
            <person name="Duesterhoeft A."/>
            <person name="Fritzc C."/>
            <person name="Holzer E."/>
            <person name="Moestl D."/>
            <person name="Hilbert H."/>
            <person name="Borzym K."/>
            <person name="Langer I."/>
            <person name="Beck A."/>
            <person name="Lehrach H."/>
            <person name="Reinhardt R."/>
            <person name="Pohl T.M."/>
            <person name="Eger P."/>
            <person name="Zimmermann W."/>
            <person name="Wedler H."/>
            <person name="Wambutt R."/>
            <person name="Purnelle B."/>
            <person name="Goffeau A."/>
            <person name="Cadieu E."/>
            <person name="Dreano S."/>
            <person name="Gloux S."/>
            <person name="Lelaure V."/>
            <person name="Mottier S."/>
            <person name="Galibert F."/>
            <person name="Aves S.J."/>
            <person name="Xiang Z."/>
            <person name="Hunt C."/>
            <person name="Moore K."/>
            <person name="Hurst S.M."/>
            <person name="Lucas M."/>
            <person name="Rochet M."/>
            <person name="Gaillardin C."/>
            <person name="Tallada V.A."/>
            <person name="Garzon A."/>
            <person name="Thode G."/>
            <person name="Daga R.R."/>
            <person name="Cruzado L."/>
            <person name="Jimenez J."/>
            <person name="Sanchez M."/>
            <person name="del Rey F."/>
            <person name="Benito J."/>
            <person name="Dominguez A."/>
            <person name="Revuelta J.L."/>
            <person name="Moreno S."/>
            <person name="Armstrong J."/>
            <person name="Forsburg S.L."/>
            <person name="Cerutti L."/>
            <person name="Lowe T."/>
            <person name="McCombie W.R."/>
            <person name="Paulsen I."/>
            <person name="Potashkin J."/>
            <person name="Shpakovski G.V."/>
            <person name="Ussery D."/>
            <person name="Barrell B.G."/>
            <person name="Nurse P."/>
        </authorList>
    </citation>
    <scope>NUCLEOTIDE SEQUENCE [LARGE SCALE GENOMIC DNA]</scope>
    <source>
        <strain>972 / ATCC 24843</strain>
    </source>
</reference>
<reference key="2">
    <citation type="journal article" date="2011" name="Science">
        <title>Comparative functional genomics of the fission yeasts.</title>
        <authorList>
            <person name="Rhind N."/>
            <person name="Chen Z."/>
            <person name="Yassour M."/>
            <person name="Thompson D.A."/>
            <person name="Haas B.J."/>
            <person name="Habib N."/>
            <person name="Wapinski I."/>
            <person name="Roy S."/>
            <person name="Lin M.F."/>
            <person name="Heiman D.I."/>
            <person name="Young S.K."/>
            <person name="Furuya K."/>
            <person name="Guo Y."/>
            <person name="Pidoux A."/>
            <person name="Chen H.M."/>
            <person name="Robbertse B."/>
            <person name="Goldberg J.M."/>
            <person name="Aoki K."/>
            <person name="Bayne E.H."/>
            <person name="Berlin A.M."/>
            <person name="Desjardins C.A."/>
            <person name="Dobbs E."/>
            <person name="Dukaj L."/>
            <person name="Fan L."/>
            <person name="FitzGerald M.G."/>
            <person name="French C."/>
            <person name="Gujja S."/>
            <person name="Hansen K."/>
            <person name="Keifenheim D."/>
            <person name="Levin J.Z."/>
            <person name="Mosher R.A."/>
            <person name="Mueller C.A."/>
            <person name="Pfiffner J."/>
            <person name="Priest M."/>
            <person name="Russ C."/>
            <person name="Smialowska A."/>
            <person name="Swoboda P."/>
            <person name="Sykes S.M."/>
            <person name="Vaughn M."/>
            <person name="Vengrova S."/>
            <person name="Yoder R."/>
            <person name="Zeng Q."/>
            <person name="Allshire R."/>
            <person name="Baulcombe D."/>
            <person name="Birren B.W."/>
            <person name="Brown W."/>
            <person name="Ekwall K."/>
            <person name="Kellis M."/>
            <person name="Leatherwood J."/>
            <person name="Levin H."/>
            <person name="Margalit H."/>
            <person name="Martienssen R."/>
            <person name="Nieduszynski C.A."/>
            <person name="Spatafora J.W."/>
            <person name="Friedman N."/>
            <person name="Dalgaard J.Z."/>
            <person name="Baumann P."/>
            <person name="Niki H."/>
            <person name="Regev A."/>
            <person name="Nusbaum C."/>
        </authorList>
    </citation>
    <scope>IDENTIFICATION</scope>
</reference>
<reference key="3">
    <citation type="journal article" date="2011" name="Genetics">
        <title>Augmented annotation of the Schizosaccharomyces pombe genome reveals additional genes required for growth and viability.</title>
        <authorList>
            <person name="Bitton D.A."/>
            <person name="Wood V."/>
            <person name="Scutt P.J."/>
            <person name="Grallert A."/>
            <person name="Yates T."/>
            <person name="Smith D.L."/>
            <person name="Hagan I.M."/>
            <person name="Miller C.J."/>
        </authorList>
    </citation>
    <scope>IDENTIFICATION BY MASS SPECTROMETRY</scope>
    <scope>DISRUPTION PHENOTYPE</scope>
</reference>
<keyword id="KW-0472">Membrane</keyword>
<keyword id="KW-0496">Mitochondrion</keyword>
<keyword id="KW-0999">Mitochondrion inner membrane</keyword>
<keyword id="KW-1185">Reference proteome</keyword>
<comment type="function">
    <text evidence="1">Required for efficient assembly of cytochrome c oxidase in the mitochondrial inner membrane.</text>
</comment>
<comment type="subcellular location">
    <subcellularLocation>
        <location evidence="1">Mitochondrion inner membrane</location>
        <topology evidence="1">Peripheral membrane protein</topology>
        <orientation evidence="1">Matrix side</orientation>
    </subcellularLocation>
    <text evidence="1">Mitochondrial matrix soluble protein partially associated with the inner membrane.</text>
</comment>
<comment type="disruption phenotype">
    <text evidence="2">Elongated cellular morphology at division.</text>
</comment>
<comment type="similarity">
    <text evidence="3">Belongs to the COA2 family.</text>
</comment>
<evidence type="ECO:0000250" key="1"/>
<evidence type="ECO:0000269" key="2">
    <source>
    </source>
</evidence>
<evidence type="ECO:0000305" key="3"/>
<name>COA2_SCHPO</name>